<reference key="1">
    <citation type="journal article" date="1999" name="Plant Cell Physiol.">
        <title>Cloning of the genes for cytochrome c550 and a c550-like protein from the thermophilic cyanobacterium Synechococcus elongatus.</title>
        <authorList>
            <person name="Katoh H."/>
            <person name="Itoh S."/>
            <person name="Shen J.-R."/>
            <person name="Ikeuchi M."/>
        </authorList>
    </citation>
    <scope>NUCLEOTIDE SEQUENCE [GENOMIC DNA]</scope>
</reference>
<reference key="2">
    <citation type="journal article" date="2001" name="Plant Cell Physiol.">
        <title>Functional analysis of psbV and a novel c-type cytochrome gene psbV2 of the thermophilic cyanobacterium Thermosynechococcus elongatus strain BP-1.</title>
        <authorList>
            <person name="Katoh H."/>
            <person name="Itoh S."/>
            <person name="Shen J.-R."/>
            <person name="Ikeuchi M."/>
        </authorList>
    </citation>
    <scope>NUCLEOTIDE SEQUENCE [GENOMIC DNA]</scope>
    <scope>FUNCTION</scope>
</reference>
<reference key="3">
    <citation type="journal article" date="2002" name="DNA Res.">
        <title>Complete genome structure of the thermophilic cyanobacterium Thermosynechococcus elongatus BP-1.</title>
        <authorList>
            <person name="Nakamura Y."/>
            <person name="Kaneko T."/>
            <person name="Sato S."/>
            <person name="Ikeuchi M."/>
            <person name="Katoh H."/>
            <person name="Sasamoto S."/>
            <person name="Watanabe A."/>
            <person name="Iriguchi M."/>
            <person name="Kawashima K."/>
            <person name="Kimura T."/>
            <person name="Kishida Y."/>
            <person name="Kiyokawa C."/>
            <person name="Kohara M."/>
            <person name="Matsumoto M."/>
            <person name="Matsuno A."/>
            <person name="Nakazaki N."/>
            <person name="Shimpo S."/>
            <person name="Sugimoto M."/>
            <person name="Takeuchi C."/>
            <person name="Yamada M."/>
            <person name="Tabata S."/>
        </authorList>
    </citation>
    <scope>NUCLEOTIDE SEQUENCE [LARGE SCALE GENOMIC DNA]</scope>
    <source>
        <strain>NIES-2133 / IAM M-273 / BP-1</strain>
    </source>
</reference>
<reference key="4">
    <citation type="journal article" date="2003" name="Plant Cell Physiol.">
        <title>Structural and EPR characterization of the soluble form of cytochrome c-550 and of the psbV2 gene product from the cyanobacterium Thermosynechococcus elongatus.</title>
        <authorList>
            <person name="Kerfeld C.A."/>
            <person name="Sawaya M.R."/>
            <person name="Bottin H."/>
            <person name="Tran K.T."/>
            <person name="Sugiura M."/>
            <person name="Cascio D."/>
            <person name="Desbois A."/>
            <person name="Yeates T.O."/>
            <person name="Kirilovsky D."/>
            <person name="Boussac A."/>
        </authorList>
    </citation>
    <scope>PROTEIN SEQUENCE OF 35-44</scope>
    <scope>COFACTOR</scope>
    <scope>INDUCTION</scope>
</reference>
<reference key="5">
    <citation type="journal article" date="2013" name="FEBS Lett.">
        <title>Crystal structure at 1.5A resolution of the PsbV2 cytochrome from the cyanobacterium Thermosynechococcus elongatus.</title>
        <authorList>
            <person name="Suga M."/>
            <person name="Lai T.L."/>
            <person name="Sugiura M."/>
            <person name="Shen J.R."/>
            <person name="Boussac A."/>
        </authorList>
    </citation>
    <scope>X-RAY CRYSTALLOGRAPHY (1.51 ANGSTROMS) OF 35-175 IN COMPLEX WITH HEME C</scope>
</reference>
<accession>Q8DJE2</accession>
<accession>Q7DI24</accession>
<feature type="signal peptide" evidence="3">
    <location>
        <begin position="1"/>
        <end position="34"/>
    </location>
</feature>
<feature type="chain" id="PRO_0000295600" description="Cytochrome c-550-like protein">
    <location>
        <begin position="35"/>
        <end position="175"/>
    </location>
</feature>
<feature type="binding site" description="covalent" evidence="1 7">
    <location>
        <position position="81"/>
    </location>
    <ligand>
        <name>heme c</name>
        <dbReference type="ChEBI" id="CHEBI:61717"/>
    </ligand>
</feature>
<feature type="binding site" description="covalent" evidence="1 7">
    <location>
        <position position="84"/>
    </location>
    <ligand>
        <name>heme c</name>
        <dbReference type="ChEBI" id="CHEBI:61717"/>
    </ligand>
</feature>
<feature type="binding site" description="axial binding residue" evidence="1 7">
    <location>
        <position position="85"/>
    </location>
    <ligand>
        <name>heme c</name>
        <dbReference type="ChEBI" id="CHEBI:61717"/>
    </ligand>
    <ligandPart>
        <name>Fe</name>
        <dbReference type="ChEBI" id="CHEBI:18248"/>
    </ligandPart>
</feature>
<feature type="binding site" description="axial binding residue" evidence="7">
    <location>
        <position position="135"/>
    </location>
    <ligand>
        <name>heme c</name>
        <dbReference type="ChEBI" id="CHEBI:61717"/>
    </ligand>
    <ligandPart>
        <name>Fe</name>
        <dbReference type="ChEBI" id="CHEBI:18248"/>
    </ligandPart>
</feature>
<feature type="helix" evidence="8">
    <location>
        <begin position="40"/>
        <end position="44"/>
    </location>
</feature>
<feature type="strand" evidence="8">
    <location>
        <begin position="49"/>
        <end position="55"/>
    </location>
</feature>
<feature type="strand" evidence="8">
    <location>
        <begin position="62"/>
        <end position="66"/>
    </location>
</feature>
<feature type="helix" evidence="8">
    <location>
        <begin position="67"/>
        <end position="80"/>
    </location>
</feature>
<feature type="helix" evidence="8">
    <location>
        <begin position="82"/>
        <end position="85"/>
    </location>
</feature>
<feature type="helix" evidence="8">
    <location>
        <begin position="86"/>
        <end position="88"/>
    </location>
</feature>
<feature type="helix" evidence="8">
    <location>
        <begin position="100"/>
        <end position="104"/>
    </location>
</feature>
<feature type="strand" evidence="8">
    <location>
        <begin position="106"/>
        <end position="108"/>
    </location>
</feature>
<feature type="helix" evidence="8">
    <location>
        <begin position="113"/>
        <end position="121"/>
    </location>
</feature>
<feature type="strand" evidence="8">
    <location>
        <begin position="128"/>
        <end position="131"/>
    </location>
</feature>
<feature type="strand" evidence="8">
    <location>
        <begin position="133"/>
        <end position="135"/>
    </location>
</feature>
<feature type="turn" evidence="8">
    <location>
        <begin position="140"/>
        <end position="142"/>
    </location>
</feature>
<feature type="helix" evidence="8">
    <location>
        <begin position="145"/>
        <end position="161"/>
    </location>
</feature>
<feature type="turn" evidence="8">
    <location>
        <begin position="163"/>
        <end position="166"/>
    </location>
</feature>
<evidence type="ECO:0000255" key="1">
    <source>
        <dbReference type="PROSITE-ProRule" id="PRU00433"/>
    </source>
</evidence>
<evidence type="ECO:0000269" key="2">
    <source>
    </source>
</evidence>
<evidence type="ECO:0000269" key="3">
    <source>
    </source>
</evidence>
<evidence type="ECO:0000303" key="4">
    <source ref="1"/>
</evidence>
<evidence type="ECO:0000305" key="5"/>
<evidence type="ECO:0000305" key="6">
    <source>
    </source>
</evidence>
<evidence type="ECO:0007744" key="7">
    <source>
        <dbReference type="PDB" id="4LJI"/>
    </source>
</evidence>
<evidence type="ECO:0007829" key="8">
    <source>
        <dbReference type="PDB" id="4LJI"/>
    </source>
</evidence>
<gene>
    <name evidence="4" type="primary">psbV2</name>
    <name type="ordered locus">tll1284</name>
</gene>
<protein>
    <recommendedName>
        <fullName evidence="4">Cytochrome c-550-like protein</fullName>
    </recommendedName>
</protein>
<dbReference type="EMBL" id="AB052597">
    <property type="protein sequence ID" value="BAB20060.1"/>
    <property type="molecule type" value="Genomic_DNA"/>
</dbReference>
<dbReference type="EMBL" id="BA000039">
    <property type="protein sequence ID" value="BAC08836.1"/>
    <property type="molecule type" value="Genomic_DNA"/>
</dbReference>
<dbReference type="RefSeq" id="NP_682074.1">
    <property type="nucleotide sequence ID" value="NC_004113.1"/>
</dbReference>
<dbReference type="RefSeq" id="WP_011057124.1">
    <property type="nucleotide sequence ID" value="NC_004113.1"/>
</dbReference>
<dbReference type="PDB" id="4LJI">
    <property type="method" value="X-ray"/>
    <property type="resolution" value="1.51 A"/>
    <property type="chains" value="A/B=35-175"/>
</dbReference>
<dbReference type="PDBsum" id="4LJI"/>
<dbReference type="SMR" id="Q8DJE2"/>
<dbReference type="STRING" id="197221.gene:10747880"/>
<dbReference type="EnsemblBacteria" id="BAC08836">
    <property type="protein sequence ID" value="BAC08836"/>
    <property type="gene ID" value="BAC08836"/>
</dbReference>
<dbReference type="KEGG" id="tel:tll1284"/>
<dbReference type="PATRIC" id="fig|197221.4.peg.1351"/>
<dbReference type="eggNOG" id="COG2010">
    <property type="taxonomic scope" value="Bacteria"/>
</dbReference>
<dbReference type="EvolutionaryTrace" id="Q8DJE2"/>
<dbReference type="Proteomes" id="UP000000440">
    <property type="component" value="Chromosome"/>
</dbReference>
<dbReference type="GO" id="GO:0009523">
    <property type="term" value="C:photosystem II"/>
    <property type="evidence" value="ECO:0007669"/>
    <property type="project" value="UniProtKB-KW"/>
</dbReference>
<dbReference type="GO" id="GO:0031676">
    <property type="term" value="C:plasma membrane-derived thylakoid membrane"/>
    <property type="evidence" value="ECO:0007669"/>
    <property type="project" value="UniProtKB-SubCell"/>
</dbReference>
<dbReference type="GO" id="GO:0009055">
    <property type="term" value="F:electron transfer activity"/>
    <property type="evidence" value="ECO:0007669"/>
    <property type="project" value="InterPro"/>
</dbReference>
<dbReference type="GO" id="GO:0020037">
    <property type="term" value="F:heme binding"/>
    <property type="evidence" value="ECO:0007669"/>
    <property type="project" value="InterPro"/>
</dbReference>
<dbReference type="GO" id="GO:0005506">
    <property type="term" value="F:iron ion binding"/>
    <property type="evidence" value="ECO:0007669"/>
    <property type="project" value="InterPro"/>
</dbReference>
<dbReference type="GO" id="GO:0015979">
    <property type="term" value="P:photosynthesis"/>
    <property type="evidence" value="ECO:0007669"/>
    <property type="project" value="UniProtKB-KW"/>
</dbReference>
<dbReference type="GO" id="GO:0022904">
    <property type="term" value="P:respiratory electron transport chain"/>
    <property type="evidence" value="ECO:0007669"/>
    <property type="project" value="InterPro"/>
</dbReference>
<dbReference type="Gene3D" id="1.10.760.10">
    <property type="entry name" value="Cytochrome c-like domain"/>
    <property type="match status" value="1"/>
</dbReference>
<dbReference type="InterPro" id="IPR009056">
    <property type="entry name" value="Cyt_c-like_dom"/>
</dbReference>
<dbReference type="InterPro" id="IPR036909">
    <property type="entry name" value="Cyt_c-like_dom_sf"/>
</dbReference>
<dbReference type="InterPro" id="IPR029490">
    <property type="entry name" value="Cytochrom_C550"/>
</dbReference>
<dbReference type="InterPro" id="IPR016003">
    <property type="entry name" value="PsbV_cyt_c550-like"/>
</dbReference>
<dbReference type="NCBIfam" id="TIGR03046">
    <property type="entry name" value="PS_II_psbV2"/>
    <property type="match status" value="1"/>
</dbReference>
<dbReference type="Pfam" id="PF14495">
    <property type="entry name" value="Cytochrom_C550"/>
    <property type="match status" value="1"/>
</dbReference>
<dbReference type="PIRSF" id="PIRSF005890">
    <property type="entry name" value="Phot_II_cyt_c550"/>
    <property type="match status" value="1"/>
</dbReference>
<dbReference type="SUPFAM" id="SSF46626">
    <property type="entry name" value="Cytochrome c"/>
    <property type="match status" value="1"/>
</dbReference>
<dbReference type="PROSITE" id="PS51007">
    <property type="entry name" value="CYTC"/>
    <property type="match status" value="1"/>
</dbReference>
<name>PSBV2_THEVB</name>
<sequence>MYQPHFWQRSIGWLCGGLLILLLGWTIAPATALAAAGVDNYVIQYLKVTDTVELPVNDRGETKTFTAVDLTRGKRLFEENCKNCHVGGSTLPNPLVSLSLKDLKGATPPRDTIASLVAFQRSPKSYDGSEESYSCRRVSEDWLTTEQLETLAAFILRAAAVAPGWGVESFPDSAP</sequence>
<organism>
    <name type="scientific">Thermosynechococcus vestitus (strain NIES-2133 / IAM M-273 / BP-1)</name>
    <dbReference type="NCBI Taxonomy" id="197221"/>
    <lineage>
        <taxon>Bacteria</taxon>
        <taxon>Bacillati</taxon>
        <taxon>Cyanobacteriota</taxon>
        <taxon>Cyanophyceae</taxon>
        <taxon>Acaryochloridales</taxon>
        <taxon>Thermosynechococcaceae</taxon>
        <taxon>Thermosynechococcus</taxon>
    </lineage>
</organism>
<keyword id="KW-0002">3D-structure</keyword>
<keyword id="KW-0903">Direct protein sequencing</keyword>
<keyword id="KW-0249">Electron transport</keyword>
<keyword id="KW-0349">Heme</keyword>
<keyword id="KW-0408">Iron</keyword>
<keyword id="KW-0472">Membrane</keyword>
<keyword id="KW-0479">Metal-binding</keyword>
<keyword id="KW-0602">Photosynthesis</keyword>
<keyword id="KW-0604">Photosystem II</keyword>
<keyword id="KW-1185">Reference proteome</keyword>
<keyword id="KW-0732">Signal</keyword>
<keyword id="KW-0793">Thylakoid</keyword>
<keyword id="KW-0813">Transport</keyword>
<proteinExistence type="evidence at protein level"/>
<comment type="function">
    <text evidence="2">Probable low-potential cytochrome c, can partially replace cytochrome c-550 (PsbV) function.</text>
</comment>
<comment type="cofactor">
    <cofactor evidence="6">
        <name>heme c</name>
        <dbReference type="ChEBI" id="CHEBI:61717"/>
    </cofactor>
    <text evidence="6">Binds 1 heme c group covalently per monomer.</text>
</comment>
<comment type="subcellular location">
    <subcellularLocation>
        <location>Cellular thylakoid membrane</location>
        <topology>Peripheral membrane protein</topology>
        <orientation>Lumenal side</orientation>
    </subcellularLocation>
    <text evidence="5">Associated with photosystem II at the lumenal side of the thylakoid membrane.</text>
</comment>
<comment type="induction">
    <text evidence="3">Present at very low levels (at protein level) (PubMed:12881497).</text>
</comment>
<comment type="similarity">
    <text evidence="5">Belongs to the cytochrome c family. PsbV subfamily.</text>
</comment>